<evidence type="ECO:0000255" key="1">
    <source>
        <dbReference type="HAMAP-Rule" id="MF_04017"/>
    </source>
</evidence>
<evidence type="ECO:0000256" key="2">
    <source>
        <dbReference type="SAM" id="MobiDB-lite"/>
    </source>
</evidence>
<reference key="1">
    <citation type="journal article" date="1999" name="J. Virol.">
        <title>Identification of a spliced gene from Kaposi's sarcoma-associated herpesvirus encoding a protein with similarities to latent membrane proteins 1 and 2A of Epstein-Barr virus.</title>
        <authorList>
            <person name="Glenn M."/>
            <person name="Rainbow L."/>
            <person name="Aurade F."/>
            <person name="Davison A."/>
            <person name="Schulz T.F."/>
        </authorList>
    </citation>
    <scope>NUCLEOTIDE SEQUENCE [LARGE SCALE GENOMIC DNA]</scope>
</reference>
<reference key="2">
    <citation type="journal article" date="2006" name="J. Gen. Virol.">
        <title>Kaposi's sarcoma-associated herpesvirus immune modulation: an overview.</title>
        <authorList>
            <person name="Rezaee S.A.R."/>
            <person name="Cunningham C."/>
            <person name="Davison A.J."/>
            <person name="Blackbourn D.J."/>
        </authorList>
    </citation>
    <scope>NUCLEOTIDE SEQUENCE [LARGE SCALE GENOMIC DNA]</scope>
</reference>
<keyword id="KW-0002">3D-structure</keyword>
<keyword id="KW-0167">Capsid protein</keyword>
<keyword id="KW-1048">Host nucleus</keyword>
<keyword id="KW-0426">Late protein</keyword>
<keyword id="KW-1185">Reference proteome</keyword>
<keyword id="KW-0231">Viral genome packaging</keyword>
<keyword id="KW-1188">Viral release from host cell</keyword>
<keyword id="KW-0946">Virion</keyword>
<sequence length="454" mass="49512">MDAHAINERYVGPRCHRLAHVVLPRTFLLHHAIPLEPEIIFSTYTRFSRSPGSSRRLVVCGKRVLPGEENQLASSPSGLALSLPLFSHDGNFHPFDISVLRISCPGSNLSLTVRFLYLSLVVAMGAGRNNARSPTVDGVSPPEGAVAHPLEELQRLARATPDPALTRGPLQVLTGLLRAGSDGDRATHHMALEAPGTVRGESLDPPVSQKGPARTRHRPPPVRLSFNPVNADVPATWRDATNVYSGAPYYVCVYERGGRQEDDWLPIPLSFPEEPVPPPPGLVFMDDLFINTKQCDFVDTLEAACRTQGYTLRQRVPVAIPRDAEIADAVKSHFLEACLVLRGLASEASAWIRAATSPPLGRHACWMDVLGLWESRPHTLGLELRGVNCGGTDGDWLEILKQPDVQKTVSGSLVACVIVTPALEAWLVLPGGFAIKGRYRASKEDLVFIRGRYG</sequence>
<organism>
    <name type="scientific">Human herpesvirus 8 type P (isolate GK18)</name>
    <name type="common">HHV-8</name>
    <name type="synonym">Kaposi's sarcoma-associated herpesvirus</name>
    <dbReference type="NCBI Taxonomy" id="868565"/>
    <lineage>
        <taxon>Viruses</taxon>
        <taxon>Duplodnaviria</taxon>
        <taxon>Heunggongvirae</taxon>
        <taxon>Peploviricota</taxon>
        <taxon>Herviviricetes</taxon>
        <taxon>Herpesvirales</taxon>
        <taxon>Orthoherpesviridae</taxon>
        <taxon>Gammaherpesvirinae</taxon>
        <taxon>Rhadinovirus</taxon>
        <taxon>Rhadinovirus humangamma8</taxon>
        <taxon>Human herpesvirus 8</taxon>
    </lineage>
</organism>
<proteinExistence type="evidence at protein level"/>
<protein>
    <recommendedName>
        <fullName evidence="1">Capsid vertex component 1</fullName>
    </recommendedName>
</protein>
<organismHost>
    <name type="scientific">Homo sapiens</name>
    <name type="common">Human</name>
    <dbReference type="NCBI Taxonomy" id="9606"/>
</organismHost>
<accession>F5HB39</accession>
<name>CVC1_HHV8P</name>
<comment type="function">
    <text evidence="1">Capsid vertex-specific component that plays a role during viral DNA encapsidation, assuring correct genome cleavage and presumably stabilizing capsids that contain full-length viral genomes.</text>
</comment>
<comment type="subunit">
    <text evidence="1">Interacts (via C-terminus) with capsid vertex component 2/CVC2.</text>
</comment>
<comment type="subcellular location">
    <subcellularLocation>
        <location evidence="1">Virion</location>
    </subcellularLocation>
    <subcellularLocation>
        <location evidence="1">Host nucleus</location>
    </subcellularLocation>
</comment>
<comment type="similarity">
    <text evidence="1">Belongs to the herpesviridae CVC1 protein family.</text>
</comment>
<feature type="chain" id="PRO_0000423785" description="Capsid vertex component 1">
    <location>
        <begin position="1"/>
        <end position="454"/>
    </location>
</feature>
<feature type="region of interest" description="Disordered" evidence="2">
    <location>
        <begin position="197"/>
        <end position="227"/>
    </location>
</feature>
<dbReference type="EMBL" id="AF148805">
    <property type="protein sequence ID" value="ABD28883.1"/>
    <property type="molecule type" value="Genomic_DNA"/>
</dbReference>
<dbReference type="RefSeq" id="YP_001129385.1">
    <property type="nucleotide sequence ID" value="NC_009333.1"/>
</dbReference>
<dbReference type="PDB" id="6PPB">
    <property type="method" value="EM"/>
    <property type="resolution" value="4.30 A"/>
    <property type="chains" value="k=1-454"/>
</dbReference>
<dbReference type="PDB" id="6PPH">
    <property type="method" value="EM"/>
    <property type="resolution" value="3.80 A"/>
    <property type="chains" value="k=1-454"/>
</dbReference>
<dbReference type="PDBsum" id="6PPB"/>
<dbReference type="PDBsum" id="6PPH"/>
<dbReference type="SMR" id="F5HB39"/>
<dbReference type="GeneID" id="4961479"/>
<dbReference type="KEGG" id="vg:4961479"/>
<dbReference type="Proteomes" id="UP000000942">
    <property type="component" value="Segment"/>
</dbReference>
<dbReference type="GO" id="GO:0042025">
    <property type="term" value="C:host cell nucleus"/>
    <property type="evidence" value="ECO:0007669"/>
    <property type="project" value="UniProtKB-SubCell"/>
</dbReference>
<dbReference type="GO" id="GO:0019028">
    <property type="term" value="C:viral capsid"/>
    <property type="evidence" value="ECO:0007669"/>
    <property type="project" value="UniProtKB-KW"/>
</dbReference>
<dbReference type="GO" id="GO:0051276">
    <property type="term" value="P:chromosome organization"/>
    <property type="evidence" value="ECO:0007669"/>
    <property type="project" value="InterPro"/>
</dbReference>
<dbReference type="HAMAP" id="MF_04017">
    <property type="entry name" value="HSV_CVC1"/>
    <property type="match status" value="1"/>
</dbReference>
<dbReference type="InterPro" id="IPR007640">
    <property type="entry name" value="UL17-like"/>
</dbReference>
<dbReference type="Pfam" id="PF04559">
    <property type="entry name" value="Herpes_UL17"/>
    <property type="match status" value="1"/>
</dbReference>
<gene>
    <name evidence="1" type="primary">CVC1</name>
    <name type="ordered locus">ORF32</name>
</gene>